<protein>
    <recommendedName>
        <fullName evidence="4">Protein O-GlcNAcase</fullName>
        <shortName evidence="4">OGA</shortName>
        <ecNumber evidence="3">3.2.1.169</ecNumber>
    </recommendedName>
    <alternativeName>
        <fullName>Beta-N-acetylglucosaminidase</fullName>
    </alternativeName>
    <alternativeName>
        <fullName>Beta-N-acetylhexosaminidase</fullName>
    </alternativeName>
    <alternativeName>
        <fullName>Beta-hexosaminidase</fullName>
    </alternativeName>
    <alternativeName>
        <fullName>N-acetyl-beta-D-glucosaminidase</fullName>
    </alternativeName>
    <alternativeName>
        <fullName>N-acetyl-beta-glucosaminidase</fullName>
    </alternativeName>
</protein>
<accession>Q2CEE3</accession>
<reference evidence="7" key="1">
    <citation type="journal article" date="2010" name="J. Bacteriol.">
        <title>Genome sequences of Oceanicola granulosus HTCC2516(T) and Oceanicola batsensis HTCC2597(TDelta).</title>
        <authorList>
            <person name="Thrash J.C."/>
            <person name="Cho J.C."/>
            <person name="Vergin K.L."/>
            <person name="Giovannoni S.J."/>
        </authorList>
    </citation>
    <scope>NUCLEOTIDE SEQUENCE [LARGE SCALE GENOMIC DNA]</scope>
    <source>
        <strain evidence="7">ATCC BAA-861 / DSM 15982 / KCTC 12143 / HTCC2516</strain>
    </source>
</reference>
<reference key="2">
    <citation type="journal article" date="2010" name="Biochem. J.">
        <title>Human OGA binds substrates in a conserved peptide recognition groove.</title>
        <authorList>
            <person name="Schimpl M."/>
            <person name="Schuttelkopf A.W."/>
            <person name="Borodkin V.S."/>
            <person name="van Aalten D.M."/>
        </authorList>
    </citation>
    <scope>X-RAY CRYSTALLOGRAPHY (2.00 ANGSTROMS) OF APOPROTEIN AND IN COMPLEX WITH THE SUBSTRATE ANALOG PUGNAC</scope>
    <scope>FUNCTION</scope>
    <scope>CATALYTIC ACTIVITY</scope>
    <scope>BIOPHYSICOCHEMICAL PROPERTIES</scope>
    <scope>ACTIVITY REGULATION</scope>
    <source>
        <strain evidence="4">ATCC BAA-861 / DSM 15982 / KCTC 12143 / HTCC2516</strain>
    </source>
</reference>
<proteinExistence type="evidence at protein level"/>
<keyword id="KW-0002">3D-structure</keyword>
<keyword id="KW-0326">Glycosidase</keyword>
<keyword id="KW-0378">Hydrolase</keyword>
<keyword id="KW-1185">Reference proteome</keyword>
<feature type="chain" id="PRO_0000430934" description="Protein O-GlcNAcase">
    <location>
        <begin position="1"/>
        <end position="447"/>
    </location>
</feature>
<feature type="domain" description="GH84" evidence="2">
    <location>
        <begin position="1"/>
        <end position="277"/>
    </location>
</feature>
<feature type="active site" description="Proton donor" evidence="2">
    <location>
        <position position="116"/>
    </location>
</feature>
<feature type="binding site" evidence="6 8">
    <location>
        <position position="8"/>
    </location>
    <ligand>
        <name>a protein</name>
        <dbReference type="ChEBI" id="CHEBI:16541"/>
    </ligand>
</feature>
<feature type="binding site" evidence="1">
    <location>
        <position position="39"/>
    </location>
    <ligand>
        <name>a protein</name>
        <dbReference type="ChEBI" id="CHEBI:16541"/>
    </ligand>
</feature>
<feature type="binding site" evidence="1">
    <location>
        <position position="115"/>
    </location>
    <ligand>
        <name>a protein</name>
        <dbReference type="ChEBI" id="CHEBI:16541"/>
    </ligand>
</feature>
<feature type="binding site" evidence="6 8">
    <location>
        <position position="160"/>
    </location>
    <ligand>
        <name>a protein</name>
        <dbReference type="ChEBI" id="CHEBI:16541"/>
    </ligand>
</feature>
<feature type="binding site" evidence="6 8">
    <location>
        <begin position="219"/>
        <end position="221"/>
    </location>
    <ligand>
        <name>a protein</name>
        <dbReference type="ChEBI" id="CHEBI:16541"/>
    </ligand>
</feature>
<feature type="binding site" evidence="6 8">
    <location>
        <position position="226"/>
    </location>
    <ligand>
        <name>a protein</name>
        <dbReference type="ChEBI" id="CHEBI:16541"/>
    </ligand>
</feature>
<feature type="binding site" evidence="6 8">
    <location>
        <position position="254"/>
    </location>
    <ligand>
        <name>a protein</name>
        <dbReference type="ChEBI" id="CHEBI:16541"/>
    </ligand>
</feature>
<feature type="strand" evidence="11">
    <location>
        <begin position="2"/>
        <end position="7"/>
    </location>
</feature>
<feature type="strand" evidence="9">
    <location>
        <begin position="10"/>
        <end position="12"/>
    </location>
</feature>
<feature type="helix" evidence="11">
    <location>
        <begin position="16"/>
        <end position="28"/>
    </location>
</feature>
<feature type="strand" evidence="11">
    <location>
        <begin position="33"/>
        <end position="36"/>
    </location>
</feature>
<feature type="turn" evidence="11">
    <location>
        <begin position="42"/>
        <end position="49"/>
    </location>
</feature>
<feature type="helix" evidence="11">
    <location>
        <begin position="54"/>
        <end position="69"/>
    </location>
</feature>
<feature type="strand" evidence="11">
    <location>
        <begin position="73"/>
        <end position="78"/>
    </location>
</feature>
<feature type="helix" evidence="11">
    <location>
        <begin position="89"/>
        <end position="104"/>
    </location>
</feature>
<feature type="strand" evidence="11">
    <location>
        <begin position="109"/>
        <end position="113"/>
    </location>
</feature>
<feature type="helix" evidence="11">
    <location>
        <begin position="123"/>
        <end position="126"/>
    </location>
</feature>
<feature type="helix" evidence="11">
    <location>
        <begin position="132"/>
        <end position="146"/>
    </location>
</feature>
<feature type="turn" evidence="11">
    <location>
        <begin position="147"/>
        <end position="149"/>
    </location>
</feature>
<feature type="strand" evidence="11">
    <location>
        <begin position="151"/>
        <end position="156"/>
    </location>
</feature>
<feature type="helix" evidence="11">
    <location>
        <begin position="162"/>
        <end position="165"/>
    </location>
</feature>
<feature type="helix" evidence="11">
    <location>
        <begin position="169"/>
        <end position="171"/>
    </location>
</feature>
<feature type="helix" evidence="11">
    <location>
        <begin position="173"/>
        <end position="181"/>
    </location>
</feature>
<feature type="strand" evidence="11">
    <location>
        <begin position="186"/>
        <end position="190"/>
    </location>
</feature>
<feature type="strand" evidence="11">
    <location>
        <begin position="193"/>
        <end position="196"/>
    </location>
</feature>
<feature type="helix" evidence="11">
    <location>
        <begin position="202"/>
        <end position="212"/>
    </location>
</feature>
<feature type="strand" evidence="11">
    <location>
        <begin position="217"/>
        <end position="220"/>
    </location>
</feature>
<feature type="helix" evidence="10">
    <location>
        <begin position="226"/>
        <end position="228"/>
    </location>
</feature>
<feature type="helix" evidence="11">
    <location>
        <begin position="242"/>
        <end position="247"/>
    </location>
</feature>
<feature type="strand" evidence="11">
    <location>
        <begin position="249"/>
        <end position="253"/>
    </location>
</feature>
<feature type="helix" evidence="11">
    <location>
        <begin position="259"/>
        <end position="262"/>
    </location>
</feature>
<feature type="helix" evidence="11">
    <location>
        <begin position="263"/>
        <end position="274"/>
    </location>
</feature>
<feature type="helix" evidence="11">
    <location>
        <begin position="280"/>
        <end position="291"/>
    </location>
</feature>
<feature type="helix" evidence="11">
    <location>
        <begin position="292"/>
        <end position="295"/>
    </location>
</feature>
<feature type="strand" evidence="11">
    <location>
        <begin position="296"/>
        <end position="301"/>
    </location>
</feature>
<feature type="helix" evidence="11">
    <location>
        <begin position="306"/>
        <end position="315"/>
    </location>
</feature>
<feature type="helix" evidence="11">
    <location>
        <begin position="324"/>
        <end position="336"/>
    </location>
</feature>
<feature type="strand" evidence="11">
    <location>
        <begin position="339"/>
        <end position="341"/>
    </location>
</feature>
<feature type="helix" evidence="11">
    <location>
        <begin position="347"/>
        <end position="372"/>
    </location>
</feature>
<feature type="helix" evidence="11">
    <location>
        <begin position="376"/>
        <end position="404"/>
    </location>
</feature>
<feature type="helix" evidence="11">
    <location>
        <begin position="415"/>
        <end position="418"/>
    </location>
</feature>
<feature type="helix" evidence="11">
    <location>
        <begin position="427"/>
        <end position="434"/>
    </location>
</feature>
<feature type="strand" evidence="11">
    <location>
        <begin position="435"/>
        <end position="437"/>
    </location>
</feature>
<feature type="strand" evidence="11">
    <location>
        <begin position="443"/>
        <end position="445"/>
    </location>
</feature>
<evidence type="ECO:0000250" key="1">
    <source>
        <dbReference type="UniProtKB" id="Q0TR53"/>
    </source>
</evidence>
<evidence type="ECO:0000255" key="2">
    <source>
        <dbReference type="PROSITE-ProRule" id="PRU01353"/>
    </source>
</evidence>
<evidence type="ECO:0000269" key="3">
    <source>
    </source>
</evidence>
<evidence type="ECO:0000303" key="4">
    <source>
    </source>
</evidence>
<evidence type="ECO:0000305" key="5"/>
<evidence type="ECO:0000305" key="6">
    <source>
    </source>
</evidence>
<evidence type="ECO:0000312" key="7">
    <source>
        <dbReference type="EMBL" id="EAR51054.1"/>
    </source>
</evidence>
<evidence type="ECO:0000312" key="8">
    <source>
        <dbReference type="PDB" id="2XSB"/>
    </source>
</evidence>
<evidence type="ECO:0007829" key="9">
    <source>
        <dbReference type="PDB" id="2XSA"/>
    </source>
</evidence>
<evidence type="ECO:0007829" key="10">
    <source>
        <dbReference type="PDB" id="2XSB"/>
    </source>
</evidence>
<evidence type="ECO:0007829" key="11">
    <source>
        <dbReference type="PDB" id="7KHS"/>
    </source>
</evidence>
<organism evidence="7">
    <name type="scientific">Oceanicola granulosus (strain ATCC BAA-861 / DSM 15982 / KCTC 12143 / HTCC2516)</name>
    <dbReference type="NCBI Taxonomy" id="314256"/>
    <lineage>
        <taxon>Bacteria</taxon>
        <taxon>Pseudomonadati</taxon>
        <taxon>Pseudomonadota</taxon>
        <taxon>Alphaproteobacteria</taxon>
        <taxon>Rhodobacterales</taxon>
        <taxon>Roseobacteraceae</taxon>
        <taxon>Oceanicola</taxon>
    </lineage>
</organism>
<comment type="function">
    <text evidence="3">Cleaves GlcNAc from O-glycosylated proteins. Can use p-nitrophenyl-beta-GlcNAc and 4-methylumbelliferone-GlcNAc as substrate (in vitro).</text>
</comment>
<comment type="catalytic activity">
    <reaction evidence="3">
        <text>3-O-(N-acetyl-beta-D-glucosaminyl)-L-seryl-[protein] + H2O = N-acetyl-D-glucosamine + L-seryl-[protein]</text>
        <dbReference type="Rhea" id="RHEA:48876"/>
        <dbReference type="Rhea" id="RHEA-COMP:9863"/>
        <dbReference type="Rhea" id="RHEA-COMP:12251"/>
        <dbReference type="ChEBI" id="CHEBI:15377"/>
        <dbReference type="ChEBI" id="CHEBI:29999"/>
        <dbReference type="ChEBI" id="CHEBI:90838"/>
        <dbReference type="ChEBI" id="CHEBI:506227"/>
        <dbReference type="EC" id="3.2.1.169"/>
    </reaction>
</comment>
<comment type="catalytic activity">
    <reaction evidence="3">
        <text>3-O-(N-acetyl-beta-D-glucosaminyl)-L-threonyl-[protein] + H2O = L-threonyl-[protein] + N-acetyl-D-glucosamine</text>
        <dbReference type="Rhea" id="RHEA:48892"/>
        <dbReference type="Rhea" id="RHEA-COMP:11060"/>
        <dbReference type="Rhea" id="RHEA-COMP:12252"/>
        <dbReference type="ChEBI" id="CHEBI:15377"/>
        <dbReference type="ChEBI" id="CHEBI:30013"/>
        <dbReference type="ChEBI" id="CHEBI:90840"/>
        <dbReference type="ChEBI" id="CHEBI:506227"/>
        <dbReference type="EC" id="3.2.1.169"/>
    </reaction>
</comment>
<comment type="activity regulation">
    <text evidence="3">Inhibited by PUGNac (O-(2-acetamido-2-deoxy-D-glucopyranosylidene)amino-N-phenylcarbamate).</text>
</comment>
<comment type="biophysicochemical properties">
    <kinetics>
        <KM evidence="3">8.5 mM for p-nitrophenyl-GlcNAc</KM>
        <KM evidence="3">2.9 mM for 4-methylumbelliferone-GlcNAc</KM>
    </kinetics>
    <phDependence>
        <text evidence="3">Optimum pH is 7.4-7.6.</text>
    </phDependence>
</comment>
<comment type="similarity">
    <text evidence="2 5">Belongs to the glycosyl hydrolase 84 family.</text>
</comment>
<sequence length="447" mass="50038">MLTGVIEGFYGRDWRRDERATVMDWIAAAGMNTYIYGPKDDVHVRARWRVPYDAAGLARLTELRDAAAARGMVFYVSLAPCLDVTYSDPQDRAALLARVDQLARAGLRNLVLLFDDIPSVLPEADRHRFDSFAEAQADLSNMVLRHLRGAGHVVFCPTEYCGRMAGGDPRGSAYLQRLGSTLDPAIDIFWTGPEIVSEEIVAAHLAAVGEVLRRRPVIWDNFHANDYDIRRVFAGPLGGRSRDILPLVAGWITNPNNEAEANFPAIHTTGAYLADPDYAPERAIAAAVAAWQPRFRLAFGDGAVPSDLVALLCDLFWQPFALGPETTRILSALRAALTVPRPDPSDPAWRAALEDLRDLKRRINKLFTLMTEIENRDLFHTFHNYLWEAQEEVGHLVAYCDWLDEAPPPGAVFPATDRIHNFYRRGFGVAVQDILQRDRQGRYHHGV</sequence>
<name>OGA_OCEGH</name>
<dbReference type="EC" id="3.2.1.169" evidence="3"/>
<dbReference type="EMBL" id="AAOT01000018">
    <property type="protein sequence ID" value="EAR51054.1"/>
    <property type="molecule type" value="Genomic_DNA"/>
</dbReference>
<dbReference type="RefSeq" id="WP_007254354.1">
    <property type="nucleotide sequence ID" value="NZ_CH724107.1"/>
</dbReference>
<dbReference type="PDB" id="2XSA">
    <property type="method" value="X-ray"/>
    <property type="resolution" value="2.00 A"/>
    <property type="chains" value="A=1-447"/>
</dbReference>
<dbReference type="PDB" id="2XSB">
    <property type="method" value="X-ray"/>
    <property type="resolution" value="2.11 A"/>
    <property type="chains" value="A=1-447"/>
</dbReference>
<dbReference type="PDB" id="7KHS">
    <property type="method" value="X-ray"/>
    <property type="resolution" value="1.78 A"/>
    <property type="chains" value="A/B/C/D=1-447"/>
</dbReference>
<dbReference type="PDBsum" id="2XSA"/>
<dbReference type="PDBsum" id="2XSB"/>
<dbReference type="PDBsum" id="7KHS"/>
<dbReference type="SMR" id="Q2CEE3"/>
<dbReference type="STRING" id="314256.OG2516_04129"/>
<dbReference type="CAZy" id="GH84">
    <property type="family name" value="Glycoside Hydrolase Family 84"/>
</dbReference>
<dbReference type="eggNOG" id="COG3525">
    <property type="taxonomic scope" value="Bacteria"/>
</dbReference>
<dbReference type="HOGENOM" id="CLU_001501_5_1_5"/>
<dbReference type="OrthoDB" id="9760892at2"/>
<dbReference type="EvolutionaryTrace" id="Q2CEE3"/>
<dbReference type="Proteomes" id="UP000003635">
    <property type="component" value="Unassembled WGS sequence"/>
</dbReference>
<dbReference type="GO" id="GO:0102571">
    <property type="term" value="F:[protein]-3-O-(N-acetyl-D-glucosaminyl)-L-serine/L-threonine O-N-acetyl-alpha-D-glucosaminase activity"/>
    <property type="evidence" value="ECO:0007669"/>
    <property type="project" value="UniProtKB-EC"/>
</dbReference>
<dbReference type="GO" id="GO:0016231">
    <property type="term" value="F:beta-N-acetylglucosaminidase activity"/>
    <property type="evidence" value="ECO:0000314"/>
    <property type="project" value="UniProtKB"/>
</dbReference>
<dbReference type="GO" id="GO:0005975">
    <property type="term" value="P:carbohydrate metabolic process"/>
    <property type="evidence" value="ECO:0000314"/>
    <property type="project" value="UniProtKB"/>
</dbReference>
<dbReference type="GO" id="GO:0006517">
    <property type="term" value="P:protein deglycosylation"/>
    <property type="evidence" value="ECO:0000315"/>
    <property type="project" value="UniProtKB"/>
</dbReference>
<dbReference type="FunFam" id="1.20.58.240:FF:000004">
    <property type="entry name" value="O-GlcNAc selective N-Acetyl-beta-D-glucosaminidase (O-GlcNAcase)"/>
    <property type="match status" value="1"/>
</dbReference>
<dbReference type="Gene3D" id="3.20.20.80">
    <property type="entry name" value="Glycosidases"/>
    <property type="match status" value="1"/>
</dbReference>
<dbReference type="Gene3D" id="1.20.58.240">
    <property type="entry name" value="STAT, domain 1"/>
    <property type="match status" value="1"/>
</dbReference>
<dbReference type="InterPro" id="IPR017853">
    <property type="entry name" value="Glycoside_hydrolase_SF"/>
</dbReference>
<dbReference type="InterPro" id="IPR051822">
    <property type="entry name" value="Glycosyl_Hydrolase_84"/>
</dbReference>
<dbReference type="InterPro" id="IPR011496">
    <property type="entry name" value="O-GlcNAcase_cat"/>
</dbReference>
<dbReference type="PANTHER" id="PTHR13170">
    <property type="entry name" value="O-GLCNACASE"/>
    <property type="match status" value="1"/>
</dbReference>
<dbReference type="PANTHER" id="PTHR13170:SF16">
    <property type="entry name" value="PROTEIN O-GLCNACASE"/>
    <property type="match status" value="1"/>
</dbReference>
<dbReference type="Pfam" id="PF07555">
    <property type="entry name" value="NAGidase"/>
    <property type="match status" value="1"/>
</dbReference>
<dbReference type="SUPFAM" id="SSF51445">
    <property type="entry name" value="(Trans)glycosidases"/>
    <property type="match status" value="1"/>
</dbReference>
<dbReference type="PROSITE" id="PS52009">
    <property type="entry name" value="GH84"/>
    <property type="match status" value="1"/>
</dbReference>
<gene>
    <name evidence="7" type="ORF">OG2516_04129</name>
</gene>